<organism>
    <name type="scientific">Escherichia fergusonii (strain ATCC 35469 / DSM 13698 / CCUG 18766 / IAM 14443 / JCM 21226 / LMG 7866 / NBRC 102419 / NCTC 12128 / CDC 0568-73)</name>
    <dbReference type="NCBI Taxonomy" id="585054"/>
    <lineage>
        <taxon>Bacteria</taxon>
        <taxon>Pseudomonadati</taxon>
        <taxon>Pseudomonadota</taxon>
        <taxon>Gammaproteobacteria</taxon>
        <taxon>Enterobacterales</taxon>
        <taxon>Enterobacteriaceae</taxon>
        <taxon>Escherichia</taxon>
    </lineage>
</organism>
<keyword id="KW-0997">Cell inner membrane</keyword>
<keyword id="KW-1003">Cell membrane</keyword>
<keyword id="KW-0441">Lipid A biosynthesis</keyword>
<keyword id="KW-0444">Lipid biosynthesis</keyword>
<keyword id="KW-0443">Lipid metabolism</keyword>
<keyword id="KW-0448">Lipopolysaccharide biosynthesis</keyword>
<keyword id="KW-0472">Membrane</keyword>
<keyword id="KW-0812">Transmembrane</keyword>
<keyword id="KW-1133">Transmembrane helix</keyword>
<keyword id="KW-0813">Transport</keyword>
<sequence>MIWLVLILASLLSVTGQLCQKQATRPVAINKRRKHIALWLGLGLVCLGLAMVLWLLVLQTVPVGIAYPMLSLNFVWVTLAATKLWHEPVSFRHWCGVAFIIGGIVILGSTV</sequence>
<name>ARNE_ESCF3</name>
<dbReference type="EMBL" id="CU928158">
    <property type="protein sequence ID" value="CAQ88446.1"/>
    <property type="molecule type" value="Genomic_DNA"/>
</dbReference>
<dbReference type="RefSeq" id="WP_000638037.1">
    <property type="nucleotide sequence ID" value="NC_011740.1"/>
</dbReference>
<dbReference type="SMR" id="B7LM73"/>
<dbReference type="GeneID" id="75058030"/>
<dbReference type="KEGG" id="efe:EFER_0911"/>
<dbReference type="HOGENOM" id="CLU_131462_5_1_6"/>
<dbReference type="OrthoDB" id="6058674at2"/>
<dbReference type="UniPathway" id="UPA00030"/>
<dbReference type="Proteomes" id="UP000000745">
    <property type="component" value="Chromosome"/>
</dbReference>
<dbReference type="GO" id="GO:0005886">
    <property type="term" value="C:plasma membrane"/>
    <property type="evidence" value="ECO:0007669"/>
    <property type="project" value="UniProtKB-SubCell"/>
</dbReference>
<dbReference type="GO" id="GO:1901505">
    <property type="term" value="F:carbohydrate derivative transmembrane transporter activity"/>
    <property type="evidence" value="ECO:0007669"/>
    <property type="project" value="InterPro"/>
</dbReference>
<dbReference type="GO" id="GO:0009245">
    <property type="term" value="P:lipid A biosynthetic process"/>
    <property type="evidence" value="ECO:0007669"/>
    <property type="project" value="UniProtKB-UniRule"/>
</dbReference>
<dbReference type="GO" id="GO:0009103">
    <property type="term" value="P:lipopolysaccharide biosynthetic process"/>
    <property type="evidence" value="ECO:0007669"/>
    <property type="project" value="UniProtKB-UniRule"/>
</dbReference>
<dbReference type="FunFam" id="1.10.3730.20:FF:000002">
    <property type="entry name" value="Probable 4-amino-4-deoxy-L-arabinose-phosphoundecaprenol flippase subunit ArnE"/>
    <property type="match status" value="1"/>
</dbReference>
<dbReference type="Gene3D" id="1.10.3730.20">
    <property type="match status" value="1"/>
</dbReference>
<dbReference type="HAMAP" id="MF_01869">
    <property type="entry name" value="Flippase_ArnE"/>
    <property type="match status" value="1"/>
</dbReference>
<dbReference type="InterPro" id="IPR000620">
    <property type="entry name" value="EamA_dom"/>
</dbReference>
<dbReference type="InterPro" id="IPR022883">
    <property type="entry name" value="Flippase_ArnE"/>
</dbReference>
<dbReference type="InterPro" id="IPR000390">
    <property type="entry name" value="Small_drug/metabolite_transptr"/>
</dbReference>
<dbReference type="NCBIfam" id="NF011625">
    <property type="entry name" value="PRK15051.1"/>
    <property type="match status" value="1"/>
</dbReference>
<dbReference type="PANTHER" id="PTHR30561:SF23">
    <property type="entry name" value="4-AMINO-4-DEOXY-L-ARABINOSE-PHOSPHOUNDECAPRENOL FLIPPASE SUBUNIT ARNE-RELATED"/>
    <property type="match status" value="1"/>
</dbReference>
<dbReference type="PANTHER" id="PTHR30561">
    <property type="entry name" value="SMR FAMILY PROTON-DEPENDENT DRUG EFFLUX TRANSPORTER SUGE"/>
    <property type="match status" value="1"/>
</dbReference>
<dbReference type="Pfam" id="PF00892">
    <property type="entry name" value="EamA"/>
    <property type="match status" value="1"/>
</dbReference>
<dbReference type="SUPFAM" id="SSF103481">
    <property type="entry name" value="Multidrug resistance efflux transporter EmrE"/>
    <property type="match status" value="1"/>
</dbReference>
<evidence type="ECO:0000255" key="1"/>
<evidence type="ECO:0000255" key="2">
    <source>
        <dbReference type="HAMAP-Rule" id="MF_01869"/>
    </source>
</evidence>
<comment type="function">
    <text evidence="2">Translocates 4-amino-4-deoxy-L-arabinose-phosphoundecaprenol (alpha-L-Ara4N-phosphoundecaprenol) from the cytoplasmic to the periplasmic side of the inner membrane.</text>
</comment>
<comment type="pathway">
    <text evidence="2">Bacterial outer membrane biogenesis; lipopolysaccharide biosynthesis.</text>
</comment>
<comment type="subunit">
    <text evidence="2">Heterodimer of ArnE and ArnF.</text>
</comment>
<comment type="subcellular location">
    <subcellularLocation>
        <location evidence="2">Cell inner membrane</location>
        <topology evidence="2">Multi-pass membrane protein</topology>
    </subcellularLocation>
</comment>
<comment type="similarity">
    <text evidence="2">Belongs to the ArnE family.</text>
</comment>
<gene>
    <name evidence="2" type="primary">arnE</name>
    <name type="ordered locus">EFER_0911</name>
</gene>
<reference key="1">
    <citation type="journal article" date="2009" name="PLoS Genet.">
        <title>Organised genome dynamics in the Escherichia coli species results in highly diverse adaptive paths.</title>
        <authorList>
            <person name="Touchon M."/>
            <person name="Hoede C."/>
            <person name="Tenaillon O."/>
            <person name="Barbe V."/>
            <person name="Baeriswyl S."/>
            <person name="Bidet P."/>
            <person name="Bingen E."/>
            <person name="Bonacorsi S."/>
            <person name="Bouchier C."/>
            <person name="Bouvet O."/>
            <person name="Calteau A."/>
            <person name="Chiapello H."/>
            <person name="Clermont O."/>
            <person name="Cruveiller S."/>
            <person name="Danchin A."/>
            <person name="Diard M."/>
            <person name="Dossat C."/>
            <person name="Karoui M.E."/>
            <person name="Frapy E."/>
            <person name="Garry L."/>
            <person name="Ghigo J.M."/>
            <person name="Gilles A.M."/>
            <person name="Johnson J."/>
            <person name="Le Bouguenec C."/>
            <person name="Lescat M."/>
            <person name="Mangenot S."/>
            <person name="Martinez-Jehanne V."/>
            <person name="Matic I."/>
            <person name="Nassif X."/>
            <person name="Oztas S."/>
            <person name="Petit M.A."/>
            <person name="Pichon C."/>
            <person name="Rouy Z."/>
            <person name="Ruf C.S."/>
            <person name="Schneider D."/>
            <person name="Tourret J."/>
            <person name="Vacherie B."/>
            <person name="Vallenet D."/>
            <person name="Medigue C."/>
            <person name="Rocha E.P.C."/>
            <person name="Denamur E."/>
        </authorList>
    </citation>
    <scope>NUCLEOTIDE SEQUENCE [LARGE SCALE GENOMIC DNA]</scope>
    <source>
        <strain>ATCC 35469 / DSM 13698 / BCRC 15582 / CCUG 18766 / IAM 14443 / JCM 21226 / LMG 7866 / NBRC 102419 / NCTC 12128 / CDC 0568-73</strain>
    </source>
</reference>
<feature type="chain" id="PRO_0000382975" description="Probable 4-amino-4-deoxy-L-arabinose-phosphoundecaprenol flippase subunit ArnE">
    <location>
        <begin position="1"/>
        <end position="111"/>
    </location>
</feature>
<feature type="topological domain" description="Cytoplasmic" evidence="1">
    <location>
        <begin position="1"/>
        <end position="37"/>
    </location>
</feature>
<feature type="transmembrane region" description="Helical" evidence="2">
    <location>
        <begin position="38"/>
        <end position="58"/>
    </location>
</feature>
<feature type="topological domain" description="Periplasmic" evidence="1">
    <location>
        <begin position="59"/>
        <end position="60"/>
    </location>
</feature>
<feature type="transmembrane region" description="Helical" evidence="2">
    <location>
        <begin position="61"/>
        <end position="81"/>
    </location>
</feature>
<feature type="topological domain" description="Cytoplasmic" evidence="1">
    <location>
        <begin position="82"/>
        <end position="87"/>
    </location>
</feature>
<feature type="transmembrane region" description="Helical" evidence="2">
    <location>
        <begin position="88"/>
        <end position="108"/>
    </location>
</feature>
<feature type="topological domain" description="Periplasmic" evidence="1">
    <location>
        <begin position="109"/>
        <end position="111"/>
    </location>
</feature>
<feature type="domain" description="EamA" evidence="2">
    <location>
        <begin position="40"/>
        <end position="109"/>
    </location>
</feature>
<proteinExistence type="inferred from homology"/>
<accession>B7LM73</accession>
<protein>
    <recommendedName>
        <fullName evidence="2">Probable 4-amino-4-deoxy-L-arabinose-phosphoundecaprenol flippase subunit ArnE</fullName>
        <shortName evidence="2">L-Ara4N-phosphoundecaprenol flippase subunit ArnE</shortName>
    </recommendedName>
    <alternativeName>
        <fullName evidence="2">Undecaprenyl phosphate-aminoarabinose flippase subunit ArnE</fullName>
    </alternativeName>
</protein>